<proteinExistence type="inferred from homology"/>
<comment type="function">
    <text evidence="1">May serve as docking site to facilitate the association of other proteins to the plasma membrane.</text>
</comment>
<comment type="subcellular location">
    <subcellularLocation>
        <location evidence="1">Cell membrane</location>
        <topology evidence="1">Lipid-anchor</topology>
    </subcellularLocation>
</comment>
<gene>
    <name type="primary">MUB3</name>
    <name type="ordered locus">Os02g0750600</name>
    <name type="ordered locus">LOC_Os02g51500</name>
    <name evidence="4" type="ORF">OsJ_08399</name>
    <name type="ORF">P0431B06.16</name>
</gene>
<name>MUB3_ORYSJ</name>
<feature type="chain" id="PRO_0000248177" description="Membrane-anchored ubiquitin-fold protein 3">
    <location>
        <begin position="1"/>
        <end position="116"/>
    </location>
</feature>
<feature type="propeptide" id="PRO_0000248178" description="Removed in mature form" evidence="1">
    <location>
        <begin position="117"/>
        <end position="119"/>
    </location>
</feature>
<feature type="domain" description="Ubiquitin-like" evidence="2">
    <location>
        <begin position="8"/>
        <end position="76"/>
    </location>
</feature>
<feature type="modified residue" description="Cysteine methyl ester" evidence="3">
    <location>
        <position position="116"/>
    </location>
</feature>
<feature type="lipid moiety-binding region" description="S-geranylgeranyl cysteine" evidence="1">
    <location>
        <position position="116"/>
    </location>
</feature>
<keyword id="KW-1003">Cell membrane</keyword>
<keyword id="KW-0449">Lipoprotein</keyword>
<keyword id="KW-0472">Membrane</keyword>
<keyword id="KW-0488">Methylation</keyword>
<keyword id="KW-0636">Prenylation</keyword>
<keyword id="KW-1185">Reference proteome</keyword>
<organism>
    <name type="scientific">Oryza sativa subsp. japonica</name>
    <name type="common">Rice</name>
    <dbReference type="NCBI Taxonomy" id="39947"/>
    <lineage>
        <taxon>Eukaryota</taxon>
        <taxon>Viridiplantae</taxon>
        <taxon>Streptophyta</taxon>
        <taxon>Embryophyta</taxon>
        <taxon>Tracheophyta</taxon>
        <taxon>Spermatophyta</taxon>
        <taxon>Magnoliopsida</taxon>
        <taxon>Liliopsida</taxon>
        <taxon>Poales</taxon>
        <taxon>Poaceae</taxon>
        <taxon>BOP clade</taxon>
        <taxon>Oryzoideae</taxon>
        <taxon>Oryzeae</taxon>
        <taxon>Oryzinae</taxon>
        <taxon>Oryza</taxon>
        <taxon>Oryza sativa</taxon>
    </lineage>
</organism>
<sequence length="119" mass="13079">MAGGKEPIEVKFRLFDGTDIGPSKYDPSTTVSALKEFILARWPQDKEITPKTVNDLKLINAGRILENNRTLAESRVPVGEVPGGVITMHVVVRPPQPDKNSEKQLANSPKQNRCGCTIL</sequence>
<reference key="1">
    <citation type="journal article" date="2005" name="Nature">
        <title>The map-based sequence of the rice genome.</title>
        <authorList>
            <consortium name="International rice genome sequencing project (IRGSP)"/>
        </authorList>
    </citation>
    <scope>NUCLEOTIDE SEQUENCE [LARGE SCALE GENOMIC DNA]</scope>
    <source>
        <strain>cv. Nipponbare</strain>
    </source>
</reference>
<reference key="2">
    <citation type="journal article" date="2008" name="Nucleic Acids Res.">
        <title>The rice annotation project database (RAP-DB): 2008 update.</title>
        <authorList>
            <consortium name="The rice annotation project (RAP)"/>
        </authorList>
    </citation>
    <scope>GENOME REANNOTATION</scope>
    <source>
        <strain>cv. Nipponbare</strain>
    </source>
</reference>
<reference key="3">
    <citation type="journal article" date="2013" name="Rice">
        <title>Improvement of the Oryza sativa Nipponbare reference genome using next generation sequence and optical map data.</title>
        <authorList>
            <person name="Kawahara Y."/>
            <person name="de la Bastide M."/>
            <person name="Hamilton J.P."/>
            <person name="Kanamori H."/>
            <person name="McCombie W.R."/>
            <person name="Ouyang S."/>
            <person name="Schwartz D.C."/>
            <person name="Tanaka T."/>
            <person name="Wu J."/>
            <person name="Zhou S."/>
            <person name="Childs K.L."/>
            <person name="Davidson R.M."/>
            <person name="Lin H."/>
            <person name="Quesada-Ocampo L."/>
            <person name="Vaillancourt B."/>
            <person name="Sakai H."/>
            <person name="Lee S.S."/>
            <person name="Kim J."/>
            <person name="Numa H."/>
            <person name="Itoh T."/>
            <person name="Buell C.R."/>
            <person name="Matsumoto T."/>
        </authorList>
    </citation>
    <scope>GENOME REANNOTATION</scope>
    <source>
        <strain>cv. Nipponbare</strain>
    </source>
</reference>
<reference key="4">
    <citation type="journal article" date="2005" name="PLoS Biol.">
        <title>The genomes of Oryza sativa: a history of duplications.</title>
        <authorList>
            <person name="Yu J."/>
            <person name="Wang J."/>
            <person name="Lin W."/>
            <person name="Li S."/>
            <person name="Li H."/>
            <person name="Zhou J."/>
            <person name="Ni P."/>
            <person name="Dong W."/>
            <person name="Hu S."/>
            <person name="Zeng C."/>
            <person name="Zhang J."/>
            <person name="Zhang Y."/>
            <person name="Li R."/>
            <person name="Xu Z."/>
            <person name="Li S."/>
            <person name="Li X."/>
            <person name="Zheng H."/>
            <person name="Cong L."/>
            <person name="Lin L."/>
            <person name="Yin J."/>
            <person name="Geng J."/>
            <person name="Li G."/>
            <person name="Shi J."/>
            <person name="Liu J."/>
            <person name="Lv H."/>
            <person name="Li J."/>
            <person name="Wang J."/>
            <person name="Deng Y."/>
            <person name="Ran L."/>
            <person name="Shi X."/>
            <person name="Wang X."/>
            <person name="Wu Q."/>
            <person name="Li C."/>
            <person name="Ren X."/>
            <person name="Wang J."/>
            <person name="Wang X."/>
            <person name="Li D."/>
            <person name="Liu D."/>
            <person name="Zhang X."/>
            <person name="Ji Z."/>
            <person name="Zhao W."/>
            <person name="Sun Y."/>
            <person name="Zhang Z."/>
            <person name="Bao J."/>
            <person name="Han Y."/>
            <person name="Dong L."/>
            <person name="Ji J."/>
            <person name="Chen P."/>
            <person name="Wu S."/>
            <person name="Liu J."/>
            <person name="Xiao Y."/>
            <person name="Bu D."/>
            <person name="Tan J."/>
            <person name="Yang L."/>
            <person name="Ye C."/>
            <person name="Zhang J."/>
            <person name="Xu J."/>
            <person name="Zhou Y."/>
            <person name="Yu Y."/>
            <person name="Zhang B."/>
            <person name="Zhuang S."/>
            <person name="Wei H."/>
            <person name="Liu B."/>
            <person name="Lei M."/>
            <person name="Yu H."/>
            <person name="Li Y."/>
            <person name="Xu H."/>
            <person name="Wei S."/>
            <person name="He X."/>
            <person name="Fang L."/>
            <person name="Zhang Z."/>
            <person name="Zhang Y."/>
            <person name="Huang X."/>
            <person name="Su Z."/>
            <person name="Tong W."/>
            <person name="Li J."/>
            <person name="Tong Z."/>
            <person name="Li S."/>
            <person name="Ye J."/>
            <person name="Wang L."/>
            <person name="Fang L."/>
            <person name="Lei T."/>
            <person name="Chen C.-S."/>
            <person name="Chen H.-C."/>
            <person name="Xu Z."/>
            <person name="Li H."/>
            <person name="Huang H."/>
            <person name="Zhang F."/>
            <person name="Xu H."/>
            <person name="Li N."/>
            <person name="Zhao C."/>
            <person name="Li S."/>
            <person name="Dong L."/>
            <person name="Huang Y."/>
            <person name="Li L."/>
            <person name="Xi Y."/>
            <person name="Qi Q."/>
            <person name="Li W."/>
            <person name="Zhang B."/>
            <person name="Hu W."/>
            <person name="Zhang Y."/>
            <person name="Tian X."/>
            <person name="Jiao Y."/>
            <person name="Liang X."/>
            <person name="Jin J."/>
            <person name="Gao L."/>
            <person name="Zheng W."/>
            <person name="Hao B."/>
            <person name="Liu S.-M."/>
            <person name="Wang W."/>
            <person name="Yuan L."/>
            <person name="Cao M."/>
            <person name="McDermott J."/>
            <person name="Samudrala R."/>
            <person name="Wang J."/>
            <person name="Wong G.K.-S."/>
            <person name="Yang H."/>
        </authorList>
    </citation>
    <scope>NUCLEOTIDE SEQUENCE [LARGE SCALE GENOMIC DNA]</scope>
    <source>
        <strain>cv. Nipponbare</strain>
    </source>
</reference>
<reference key="5">
    <citation type="journal article" date="2003" name="Science">
        <title>Collection, mapping, and annotation of over 28,000 cDNA clones from japonica rice.</title>
        <authorList>
            <consortium name="The rice full-length cDNA consortium"/>
        </authorList>
    </citation>
    <scope>NUCLEOTIDE SEQUENCE [LARGE SCALE MRNA]</scope>
    <source>
        <strain>cv. Nipponbare</strain>
    </source>
</reference>
<reference key="6">
    <citation type="journal article" date="2006" name="J. Biol. Chem.">
        <title>MUBS: a family of ubiquitin-fold proteins that are plasma membrane-anchored by prenylation.</title>
        <authorList>
            <person name="Downes B.P."/>
            <person name="Saracco S.A."/>
            <person name="Lee S.S."/>
            <person name="Crowell D.N."/>
            <person name="Vierstra R.D."/>
        </authorList>
    </citation>
    <scope>IDENTIFICATION</scope>
    <scope>NOMENCLATURE</scope>
</reference>
<protein>
    <recommendedName>
        <fullName>Membrane-anchored ubiquitin-fold protein 3</fullName>
        <shortName>Membrane-anchored ub-fold protein 3</shortName>
    </recommendedName>
    <alternativeName>
        <fullName>OsMUB3</fullName>
    </alternativeName>
</protein>
<evidence type="ECO:0000250" key="1">
    <source>
        <dbReference type="UniProtKB" id="Q9SH14"/>
    </source>
</evidence>
<evidence type="ECO:0000255" key="2">
    <source>
        <dbReference type="PROSITE-ProRule" id="PRU00214"/>
    </source>
</evidence>
<evidence type="ECO:0000305" key="3"/>
<evidence type="ECO:0000312" key="4">
    <source>
        <dbReference type="EMBL" id="EEE57812.1"/>
    </source>
</evidence>
<dbReference type="EMBL" id="AP004774">
    <property type="protein sequence ID" value="BAD15639.1"/>
    <property type="molecule type" value="Genomic_DNA"/>
</dbReference>
<dbReference type="EMBL" id="AP008208">
    <property type="protein sequence ID" value="BAF10047.1"/>
    <property type="molecule type" value="Genomic_DNA"/>
</dbReference>
<dbReference type="EMBL" id="AP014958">
    <property type="protein sequence ID" value="BAS80942.1"/>
    <property type="molecule type" value="Genomic_DNA"/>
</dbReference>
<dbReference type="EMBL" id="CM000139">
    <property type="protein sequence ID" value="EEE57812.1"/>
    <property type="molecule type" value="Genomic_DNA"/>
</dbReference>
<dbReference type="EMBL" id="AK066145">
    <property type="protein sequence ID" value="BAG89842.1"/>
    <property type="molecule type" value="mRNA"/>
</dbReference>
<dbReference type="EMBL" id="AK104230">
    <property type="protein sequence ID" value="BAG96526.1"/>
    <property type="molecule type" value="mRNA"/>
</dbReference>
<dbReference type="EMBL" id="AK104356">
    <property type="protein sequence ID" value="BAG96618.1"/>
    <property type="molecule type" value="mRNA"/>
</dbReference>
<dbReference type="RefSeq" id="XP_015627161.1">
    <property type="nucleotide sequence ID" value="XM_015771675.1"/>
</dbReference>
<dbReference type="SMR" id="Q6Z8K4"/>
<dbReference type="FunCoup" id="Q6Z8K4">
    <property type="interactions" value="372"/>
</dbReference>
<dbReference type="PaxDb" id="39947-Q6Z8K4"/>
<dbReference type="EnsemblPlants" id="Os02t0750600-01">
    <property type="protein sequence ID" value="Os02t0750600-01"/>
    <property type="gene ID" value="Os02g0750600"/>
</dbReference>
<dbReference type="Gramene" id="Os02t0750600-01">
    <property type="protein sequence ID" value="Os02t0750600-01"/>
    <property type="gene ID" value="Os02g0750600"/>
</dbReference>
<dbReference type="KEGG" id="dosa:Os02g0750600"/>
<dbReference type="eggNOG" id="ENOG502S2V5">
    <property type="taxonomic scope" value="Eukaryota"/>
</dbReference>
<dbReference type="HOGENOM" id="CLU_136465_1_0_1"/>
<dbReference type="InParanoid" id="Q6Z8K4"/>
<dbReference type="OrthoDB" id="1043111at2759"/>
<dbReference type="Proteomes" id="UP000000763">
    <property type="component" value="Chromosome 2"/>
</dbReference>
<dbReference type="Proteomes" id="UP000007752">
    <property type="component" value="Chromosome 2"/>
</dbReference>
<dbReference type="Proteomes" id="UP000059680">
    <property type="component" value="Chromosome 2"/>
</dbReference>
<dbReference type="GO" id="GO:0005886">
    <property type="term" value="C:plasma membrane"/>
    <property type="evidence" value="ECO:0007669"/>
    <property type="project" value="UniProtKB-SubCell"/>
</dbReference>
<dbReference type="CDD" id="cd01814">
    <property type="entry name" value="Ubl_MUBs_plant"/>
    <property type="match status" value="1"/>
</dbReference>
<dbReference type="Gene3D" id="3.10.20.90">
    <property type="entry name" value="Phosphatidylinositol 3-kinase Catalytic Subunit, Chain A, domain 1"/>
    <property type="match status" value="1"/>
</dbReference>
<dbReference type="InterPro" id="IPR017000">
    <property type="entry name" value="MUB"/>
</dbReference>
<dbReference type="InterPro" id="IPR000626">
    <property type="entry name" value="Ubiquitin-like_dom"/>
</dbReference>
<dbReference type="InterPro" id="IPR029071">
    <property type="entry name" value="Ubiquitin-like_domsf"/>
</dbReference>
<dbReference type="InterPro" id="IPR040015">
    <property type="entry name" value="UBL3-like"/>
</dbReference>
<dbReference type="InterPro" id="IPR039540">
    <property type="entry name" value="UBL3-like_ubiquitin_dom"/>
</dbReference>
<dbReference type="PANTHER" id="PTHR13169:SF0">
    <property type="entry name" value="UBIQUITIN-LIKE PROTEIN 3"/>
    <property type="match status" value="1"/>
</dbReference>
<dbReference type="PANTHER" id="PTHR13169">
    <property type="entry name" value="UBIQUITIN-LIKE PROTEIN 3 HCG-1 PROTEIN"/>
    <property type="match status" value="1"/>
</dbReference>
<dbReference type="Pfam" id="PF13881">
    <property type="entry name" value="Rad60-SLD_2"/>
    <property type="match status" value="1"/>
</dbReference>
<dbReference type="PIRSF" id="PIRSF032572">
    <property type="entry name" value="MUB"/>
    <property type="match status" value="1"/>
</dbReference>
<dbReference type="SUPFAM" id="SSF54236">
    <property type="entry name" value="Ubiquitin-like"/>
    <property type="match status" value="1"/>
</dbReference>
<dbReference type="PROSITE" id="PS50053">
    <property type="entry name" value="UBIQUITIN_2"/>
    <property type="match status" value="1"/>
</dbReference>
<accession>Q6Z8K4</accession>
<accession>Q0DXJ1</accession>